<evidence type="ECO:0000255" key="1">
    <source>
        <dbReference type="HAMAP-Rule" id="MF_00222"/>
    </source>
</evidence>
<sequence>MLKINNDTKLFGVLGENIPYTLSPAIHNYAFQRLGINAVYLRFDVRRDKFHSIIIGLLNIASGLNVTIPYKEDVVKYLYGVSEEARVIGAVNTIHNLNGYNTDYIAIYNLIKEKLIDKPSICTVFGAGGAGRASIYALLKLGCEVYVINRSLERAQSLEKDFKEFGYDIKIISSCKPGDIIVNATPNSSYVPDECIKGKLVVDLVYNPVKTPLILKAEKTGIRSINGLEILVRQAMEAERIWFGKSLSDEEVVKFLYARKLVR</sequence>
<protein>
    <recommendedName>
        <fullName evidence="1">Shikimate dehydrogenase (NADP(+))</fullName>
        <shortName evidence="1">SDH</shortName>
        <ecNumber evidence="1">1.1.1.25</ecNumber>
    </recommendedName>
</protein>
<name>AROE_SULAC</name>
<organism>
    <name type="scientific">Sulfolobus acidocaldarius (strain ATCC 33909 / DSM 639 / JCM 8929 / NBRC 15157 / NCIMB 11770)</name>
    <dbReference type="NCBI Taxonomy" id="330779"/>
    <lineage>
        <taxon>Archaea</taxon>
        <taxon>Thermoproteota</taxon>
        <taxon>Thermoprotei</taxon>
        <taxon>Sulfolobales</taxon>
        <taxon>Sulfolobaceae</taxon>
        <taxon>Sulfolobus</taxon>
    </lineage>
</organism>
<reference key="1">
    <citation type="journal article" date="2005" name="J. Bacteriol.">
        <title>The genome of Sulfolobus acidocaldarius, a model organism of the Crenarchaeota.</title>
        <authorList>
            <person name="Chen L."/>
            <person name="Bruegger K."/>
            <person name="Skovgaard M."/>
            <person name="Redder P."/>
            <person name="She Q."/>
            <person name="Torarinsson E."/>
            <person name="Greve B."/>
            <person name="Awayez M."/>
            <person name="Zibat A."/>
            <person name="Klenk H.-P."/>
            <person name="Garrett R.A."/>
        </authorList>
    </citation>
    <scope>NUCLEOTIDE SEQUENCE [LARGE SCALE GENOMIC DNA]</scope>
    <source>
        <strain>ATCC 33909 / DSM 639 / JCM 8929 / NBRC 15157 / NCIMB 11770</strain>
    </source>
</reference>
<dbReference type="EC" id="1.1.1.25" evidence="1"/>
<dbReference type="EMBL" id="CP000077">
    <property type="protein sequence ID" value="AAY79604.1"/>
    <property type="molecule type" value="Genomic_DNA"/>
</dbReference>
<dbReference type="RefSeq" id="WP_011277105.1">
    <property type="nucleotide sequence ID" value="NC_007181.1"/>
</dbReference>
<dbReference type="SMR" id="Q4JC75"/>
<dbReference type="STRING" id="330779.Saci_0185"/>
<dbReference type="GeneID" id="14550713"/>
<dbReference type="KEGG" id="sai:Saci_0185"/>
<dbReference type="PATRIC" id="fig|330779.12.peg.177"/>
<dbReference type="eggNOG" id="arCOG01033">
    <property type="taxonomic scope" value="Archaea"/>
</dbReference>
<dbReference type="HOGENOM" id="CLU_044063_4_1_2"/>
<dbReference type="UniPathway" id="UPA00053">
    <property type="reaction ID" value="UER00087"/>
</dbReference>
<dbReference type="Proteomes" id="UP000001018">
    <property type="component" value="Chromosome"/>
</dbReference>
<dbReference type="GO" id="GO:0004764">
    <property type="term" value="F:shikimate 3-dehydrogenase (NADP+) activity"/>
    <property type="evidence" value="ECO:0007669"/>
    <property type="project" value="UniProtKB-UniRule"/>
</dbReference>
<dbReference type="GO" id="GO:0008652">
    <property type="term" value="P:amino acid biosynthetic process"/>
    <property type="evidence" value="ECO:0007669"/>
    <property type="project" value="UniProtKB-KW"/>
</dbReference>
<dbReference type="GO" id="GO:0009073">
    <property type="term" value="P:aromatic amino acid family biosynthetic process"/>
    <property type="evidence" value="ECO:0007669"/>
    <property type="project" value="UniProtKB-KW"/>
</dbReference>
<dbReference type="GO" id="GO:0009423">
    <property type="term" value="P:chorismate biosynthetic process"/>
    <property type="evidence" value="ECO:0007669"/>
    <property type="project" value="UniProtKB-UniRule"/>
</dbReference>
<dbReference type="GO" id="GO:0019632">
    <property type="term" value="P:shikimate metabolic process"/>
    <property type="evidence" value="ECO:0007669"/>
    <property type="project" value="TreeGrafter"/>
</dbReference>
<dbReference type="CDD" id="cd01065">
    <property type="entry name" value="NAD_bind_Shikimate_DH"/>
    <property type="match status" value="1"/>
</dbReference>
<dbReference type="Gene3D" id="3.40.50.10860">
    <property type="entry name" value="Leucine Dehydrogenase, chain A, domain 1"/>
    <property type="match status" value="1"/>
</dbReference>
<dbReference type="Gene3D" id="3.40.50.720">
    <property type="entry name" value="NAD(P)-binding Rossmann-like Domain"/>
    <property type="match status" value="1"/>
</dbReference>
<dbReference type="HAMAP" id="MF_00222">
    <property type="entry name" value="Shikimate_DH_AroE"/>
    <property type="match status" value="1"/>
</dbReference>
<dbReference type="InterPro" id="IPR046346">
    <property type="entry name" value="Aminoacid_DH-like_N_sf"/>
</dbReference>
<dbReference type="InterPro" id="IPR036291">
    <property type="entry name" value="NAD(P)-bd_dom_sf"/>
</dbReference>
<dbReference type="InterPro" id="IPR013708">
    <property type="entry name" value="Shikimate_DH-bd_N"/>
</dbReference>
<dbReference type="InterPro" id="IPR022893">
    <property type="entry name" value="Shikimate_DH_fam"/>
</dbReference>
<dbReference type="InterPro" id="IPR006151">
    <property type="entry name" value="Shikm_DH/Glu-tRNA_Rdtase"/>
</dbReference>
<dbReference type="PANTHER" id="PTHR21089:SF1">
    <property type="entry name" value="BIFUNCTIONAL 3-DEHYDROQUINATE DEHYDRATASE_SHIKIMATE DEHYDROGENASE, CHLOROPLASTIC"/>
    <property type="match status" value="1"/>
</dbReference>
<dbReference type="PANTHER" id="PTHR21089">
    <property type="entry name" value="SHIKIMATE DEHYDROGENASE"/>
    <property type="match status" value="1"/>
</dbReference>
<dbReference type="Pfam" id="PF01488">
    <property type="entry name" value="Shikimate_DH"/>
    <property type="match status" value="1"/>
</dbReference>
<dbReference type="Pfam" id="PF08501">
    <property type="entry name" value="Shikimate_dh_N"/>
    <property type="match status" value="1"/>
</dbReference>
<dbReference type="SUPFAM" id="SSF53223">
    <property type="entry name" value="Aminoacid dehydrogenase-like, N-terminal domain"/>
    <property type="match status" value="1"/>
</dbReference>
<dbReference type="SUPFAM" id="SSF51735">
    <property type="entry name" value="NAD(P)-binding Rossmann-fold domains"/>
    <property type="match status" value="1"/>
</dbReference>
<keyword id="KW-0028">Amino-acid biosynthesis</keyword>
<keyword id="KW-0057">Aromatic amino acid biosynthesis</keyword>
<keyword id="KW-0521">NADP</keyword>
<keyword id="KW-0560">Oxidoreductase</keyword>
<keyword id="KW-1185">Reference proteome</keyword>
<accession>Q4JC75</accession>
<gene>
    <name evidence="1" type="primary">aroE</name>
    <name type="ordered locus">Saci_0185</name>
</gene>
<comment type="function">
    <text evidence="1">Involved in the biosynthesis of the chorismate, which leads to the biosynthesis of aromatic amino acids. Catalyzes the reversible NADPH linked reduction of 3-dehydroshikimate (DHSA) to yield shikimate (SA).</text>
</comment>
<comment type="catalytic activity">
    <reaction evidence="1">
        <text>shikimate + NADP(+) = 3-dehydroshikimate + NADPH + H(+)</text>
        <dbReference type="Rhea" id="RHEA:17737"/>
        <dbReference type="ChEBI" id="CHEBI:15378"/>
        <dbReference type="ChEBI" id="CHEBI:16630"/>
        <dbReference type="ChEBI" id="CHEBI:36208"/>
        <dbReference type="ChEBI" id="CHEBI:57783"/>
        <dbReference type="ChEBI" id="CHEBI:58349"/>
        <dbReference type="EC" id="1.1.1.25"/>
    </reaction>
</comment>
<comment type="pathway">
    <text evidence="1">Metabolic intermediate biosynthesis; chorismate biosynthesis; chorismate from D-erythrose 4-phosphate and phosphoenolpyruvate: step 4/7.</text>
</comment>
<comment type="subunit">
    <text evidence="1">Homodimer.</text>
</comment>
<comment type="similarity">
    <text evidence="1">Belongs to the shikimate dehydrogenase family.</text>
</comment>
<proteinExistence type="inferred from homology"/>
<feature type="chain" id="PRO_0000325184" description="Shikimate dehydrogenase (NADP(+))">
    <location>
        <begin position="1"/>
        <end position="263"/>
    </location>
</feature>
<feature type="active site" description="Proton acceptor" evidence="1">
    <location>
        <position position="71"/>
    </location>
</feature>
<feature type="binding site" evidence="1">
    <location>
        <begin position="21"/>
        <end position="23"/>
    </location>
    <ligand>
        <name>shikimate</name>
        <dbReference type="ChEBI" id="CHEBI:36208"/>
    </ligand>
</feature>
<feature type="binding site" evidence="1">
    <location>
        <position position="67"/>
    </location>
    <ligand>
        <name>shikimate</name>
        <dbReference type="ChEBI" id="CHEBI:36208"/>
    </ligand>
</feature>
<feature type="binding site" evidence="1">
    <location>
        <position position="83"/>
    </location>
    <ligand>
        <name>NADP(+)</name>
        <dbReference type="ChEBI" id="CHEBI:58349"/>
    </ligand>
</feature>
<feature type="binding site" evidence="1">
    <location>
        <position position="92"/>
    </location>
    <ligand>
        <name>shikimate</name>
        <dbReference type="ChEBI" id="CHEBI:36208"/>
    </ligand>
</feature>
<feature type="binding site" evidence="1">
    <location>
        <position position="103"/>
    </location>
    <ligand>
        <name>shikimate</name>
        <dbReference type="ChEBI" id="CHEBI:36208"/>
    </ligand>
</feature>
<feature type="binding site" evidence="1">
    <location>
        <begin position="126"/>
        <end position="130"/>
    </location>
    <ligand>
        <name>NADP(+)</name>
        <dbReference type="ChEBI" id="CHEBI:58349"/>
    </ligand>
</feature>
<feature type="binding site" evidence="1">
    <location>
        <position position="204"/>
    </location>
    <ligand>
        <name>NADP(+)</name>
        <dbReference type="ChEBI" id="CHEBI:58349"/>
    </ligand>
</feature>
<feature type="binding site" evidence="1">
    <location>
        <position position="206"/>
    </location>
    <ligand>
        <name>shikimate</name>
        <dbReference type="ChEBI" id="CHEBI:36208"/>
    </ligand>
</feature>
<feature type="binding site" evidence="1">
    <location>
        <position position="227"/>
    </location>
    <ligand>
        <name>NADP(+)</name>
        <dbReference type="ChEBI" id="CHEBI:58349"/>
    </ligand>
</feature>